<name>RL37A_THEAC</name>
<proteinExistence type="inferred from homology"/>
<sequence>MSKRTVKVGVAGRFGPRYGVTIRKEWSEIYKQKIALYTCPSCKKKRVKRVANGIWQCRHCGYKFAGGSYTPAYEIKVVEG</sequence>
<keyword id="KW-0479">Metal-binding</keyword>
<keyword id="KW-1185">Reference proteome</keyword>
<keyword id="KW-0687">Ribonucleoprotein</keyword>
<keyword id="KW-0689">Ribosomal protein</keyword>
<keyword id="KW-0694">RNA-binding</keyword>
<keyword id="KW-0699">rRNA-binding</keyword>
<keyword id="KW-0862">Zinc</keyword>
<keyword id="KW-0863">Zinc-finger</keyword>
<evidence type="ECO:0000255" key="1">
    <source>
        <dbReference type="HAMAP-Rule" id="MF_00327"/>
    </source>
</evidence>
<evidence type="ECO:0000305" key="2"/>
<comment type="function">
    <text evidence="1">Binds to the 23S rRNA.</text>
</comment>
<comment type="cofactor">
    <cofactor evidence="1">
        <name>Zn(2+)</name>
        <dbReference type="ChEBI" id="CHEBI:29105"/>
    </cofactor>
    <text evidence="1">Binds 1 zinc ion per subunit.</text>
</comment>
<comment type="subunit">
    <text evidence="1">Part of the 50S ribosomal subunit.</text>
</comment>
<comment type="similarity">
    <text evidence="1">Belongs to the eukaryotic ribosomal protein eL43 family. Putative zinc-binding subfamily.</text>
</comment>
<protein>
    <recommendedName>
        <fullName evidence="1">Large ribosomal subunit protein eL43</fullName>
    </recommendedName>
    <alternativeName>
        <fullName evidence="2">50S ribosomal protein L37Ae</fullName>
    </alternativeName>
    <alternativeName>
        <fullName evidence="1">Ribosomal protein L43e</fullName>
    </alternativeName>
</protein>
<reference key="1">
    <citation type="journal article" date="2000" name="Nature">
        <title>The genome sequence of the thermoacidophilic scavenger Thermoplasma acidophilum.</title>
        <authorList>
            <person name="Ruepp A."/>
            <person name="Graml W."/>
            <person name="Santos-Martinez M.-L."/>
            <person name="Koretke K.K."/>
            <person name="Volker C."/>
            <person name="Mewes H.-W."/>
            <person name="Frishman D."/>
            <person name="Stocker S."/>
            <person name="Lupas A.N."/>
            <person name="Baumeister W."/>
        </authorList>
    </citation>
    <scope>NUCLEOTIDE SEQUENCE [LARGE SCALE GENOMIC DNA]</scope>
    <source>
        <strain>ATCC 25905 / DSM 1728 / JCM 9062 / NBRC 15155 / AMRC-C165</strain>
    </source>
</reference>
<feature type="chain" id="PRO_0000139856" description="Large ribosomal subunit protein eL43">
    <location>
        <begin position="1"/>
        <end position="80"/>
    </location>
</feature>
<feature type="zinc finger region" description="C4-type" evidence="1">
    <location>
        <begin position="39"/>
        <end position="60"/>
    </location>
</feature>
<feature type="binding site" evidence="1">
    <location>
        <position position="39"/>
    </location>
    <ligand>
        <name>Zn(2+)</name>
        <dbReference type="ChEBI" id="CHEBI:29105"/>
    </ligand>
</feature>
<feature type="binding site" evidence="1">
    <location>
        <position position="42"/>
    </location>
    <ligand>
        <name>Zn(2+)</name>
        <dbReference type="ChEBI" id="CHEBI:29105"/>
    </ligand>
</feature>
<feature type="binding site" evidence="1">
    <location>
        <position position="57"/>
    </location>
    <ligand>
        <name>Zn(2+)</name>
        <dbReference type="ChEBI" id="CHEBI:29105"/>
    </ligand>
</feature>
<feature type="binding site" evidence="1">
    <location>
        <position position="60"/>
    </location>
    <ligand>
        <name>Zn(2+)</name>
        <dbReference type="ChEBI" id="CHEBI:29105"/>
    </ligand>
</feature>
<gene>
    <name evidence="1" type="primary">rpl37ae</name>
    <name type="ordered locus">Ta1295</name>
</gene>
<organism>
    <name type="scientific">Thermoplasma acidophilum (strain ATCC 25905 / DSM 1728 / JCM 9062 / NBRC 15155 / AMRC-C165)</name>
    <dbReference type="NCBI Taxonomy" id="273075"/>
    <lineage>
        <taxon>Archaea</taxon>
        <taxon>Methanobacteriati</taxon>
        <taxon>Thermoplasmatota</taxon>
        <taxon>Thermoplasmata</taxon>
        <taxon>Thermoplasmatales</taxon>
        <taxon>Thermoplasmataceae</taxon>
        <taxon>Thermoplasma</taxon>
    </lineage>
</organism>
<dbReference type="EMBL" id="AL445067">
    <property type="protein sequence ID" value="CAC12417.1"/>
    <property type="molecule type" value="Genomic_DNA"/>
</dbReference>
<dbReference type="RefSeq" id="WP_010901700.1">
    <property type="nucleotide sequence ID" value="NC_002578.1"/>
</dbReference>
<dbReference type="SMR" id="Q9HIP0"/>
<dbReference type="FunCoup" id="Q9HIP0">
    <property type="interactions" value="143"/>
</dbReference>
<dbReference type="STRING" id="273075.gene:9572518"/>
<dbReference type="PaxDb" id="273075-Ta1295"/>
<dbReference type="EnsemblBacteria" id="CAC12417">
    <property type="protein sequence ID" value="CAC12417"/>
    <property type="gene ID" value="CAC12417"/>
</dbReference>
<dbReference type="KEGG" id="tac:Ta1295"/>
<dbReference type="eggNOG" id="arCOG04208">
    <property type="taxonomic scope" value="Archaea"/>
</dbReference>
<dbReference type="HOGENOM" id="CLU_141199_2_0_2"/>
<dbReference type="InParanoid" id="Q9HIP0"/>
<dbReference type="OrthoDB" id="372011at2157"/>
<dbReference type="Proteomes" id="UP000001024">
    <property type="component" value="Chromosome"/>
</dbReference>
<dbReference type="GO" id="GO:1990904">
    <property type="term" value="C:ribonucleoprotein complex"/>
    <property type="evidence" value="ECO:0007669"/>
    <property type="project" value="UniProtKB-KW"/>
</dbReference>
<dbReference type="GO" id="GO:0005840">
    <property type="term" value="C:ribosome"/>
    <property type="evidence" value="ECO:0007669"/>
    <property type="project" value="UniProtKB-KW"/>
</dbReference>
<dbReference type="GO" id="GO:0070180">
    <property type="term" value="F:large ribosomal subunit rRNA binding"/>
    <property type="evidence" value="ECO:0007669"/>
    <property type="project" value="UniProtKB-UniRule"/>
</dbReference>
<dbReference type="GO" id="GO:0003735">
    <property type="term" value="F:structural constituent of ribosome"/>
    <property type="evidence" value="ECO:0007669"/>
    <property type="project" value="InterPro"/>
</dbReference>
<dbReference type="GO" id="GO:0008270">
    <property type="term" value="F:zinc ion binding"/>
    <property type="evidence" value="ECO:0007669"/>
    <property type="project" value="UniProtKB-UniRule"/>
</dbReference>
<dbReference type="GO" id="GO:0006412">
    <property type="term" value="P:translation"/>
    <property type="evidence" value="ECO:0007669"/>
    <property type="project" value="UniProtKB-UniRule"/>
</dbReference>
<dbReference type="Gene3D" id="2.20.25.30">
    <property type="match status" value="1"/>
</dbReference>
<dbReference type="HAMAP" id="MF_00327">
    <property type="entry name" value="Ribosomal_eL43"/>
    <property type="match status" value="1"/>
</dbReference>
<dbReference type="InterPro" id="IPR011331">
    <property type="entry name" value="Ribosomal_eL37/eL43"/>
</dbReference>
<dbReference type="InterPro" id="IPR002674">
    <property type="entry name" value="Ribosomal_eL43"/>
</dbReference>
<dbReference type="InterPro" id="IPR050522">
    <property type="entry name" value="Ribosomal_protein_eL43"/>
</dbReference>
<dbReference type="InterPro" id="IPR011332">
    <property type="entry name" value="Ribosomal_zn-bd"/>
</dbReference>
<dbReference type="NCBIfam" id="TIGR00280">
    <property type="entry name" value="eL43_euk_arch"/>
    <property type="match status" value="1"/>
</dbReference>
<dbReference type="NCBIfam" id="NF003058">
    <property type="entry name" value="PRK03976.1"/>
    <property type="match status" value="1"/>
</dbReference>
<dbReference type="PANTHER" id="PTHR48129">
    <property type="entry name" value="60S RIBOSOMAL PROTEIN L37A"/>
    <property type="match status" value="1"/>
</dbReference>
<dbReference type="PANTHER" id="PTHR48129:SF1">
    <property type="entry name" value="LARGE RIBOSOMAL SUBUNIT PROTEIN EL43"/>
    <property type="match status" value="1"/>
</dbReference>
<dbReference type="Pfam" id="PF01780">
    <property type="entry name" value="Ribosomal_L37ae"/>
    <property type="match status" value="1"/>
</dbReference>
<dbReference type="SUPFAM" id="SSF57829">
    <property type="entry name" value="Zn-binding ribosomal proteins"/>
    <property type="match status" value="1"/>
</dbReference>
<accession>Q9HIP0</accession>